<sequence>MGSGEEPSQMRRALVDSLAGAISGGISRTVTSPLDVIKIRFQVQLEPTTSWGILRRDIYGPSKYTGLLQATKDILREEGLPGFWRGNVPALLMYMPYTAIQFTVLHKLKTFASGSSKTEDHLHLSPYLSYVSGALAGCAATIGSYPFDLLRTILASQGEPKIYPNMRSAFVDIIKTRGVQGLYSGLSPTLVEIIPYAGLQFGSYDTFKRSMMTWNRYKYSHLNFGSEDDSVSSFQLFLCGFAAGTFSKAACHPLDVVKKRFQIEGLKRHPRYGARIESSTYKGMYHALKEIVAKEGFGGLYKGLFPSLVKSAPAGAVTFVAYEYISDWIGSKAGVE</sequence>
<organism>
    <name type="scientific">Zea mays</name>
    <name type="common">Maize</name>
    <dbReference type="NCBI Taxonomy" id="4577"/>
    <lineage>
        <taxon>Eukaryota</taxon>
        <taxon>Viridiplantae</taxon>
        <taxon>Streptophyta</taxon>
        <taxon>Embryophyta</taxon>
        <taxon>Tracheophyta</taxon>
        <taxon>Spermatophyta</taxon>
        <taxon>Magnoliopsida</taxon>
        <taxon>Liliopsida</taxon>
        <taxon>Poales</taxon>
        <taxon>Poaceae</taxon>
        <taxon>PACMAD clade</taxon>
        <taxon>Panicoideae</taxon>
        <taxon>Andropogonodae</taxon>
        <taxon>Andropogoneae</taxon>
        <taxon>Tripsacinae</taxon>
        <taxon>Zea</taxon>
    </lineage>
</organism>
<feature type="chain" id="PRO_0000439896" description="Mitochondrial thiamine diphosphate carrier 2">
    <location>
        <begin position="1"/>
        <end position="336"/>
    </location>
</feature>
<feature type="transmembrane region" description="Helical; Name=1" evidence="5">
    <location>
        <begin position="11"/>
        <end position="27"/>
    </location>
</feature>
<feature type="transmembrane region" description="Helical; Name=2" evidence="1">
    <location>
        <begin position="88"/>
        <end position="105"/>
    </location>
</feature>
<feature type="transmembrane region" description="Helical; Name=3" evidence="1">
    <location>
        <begin position="127"/>
        <end position="150"/>
    </location>
</feature>
<feature type="transmembrane region" description="Helical; Name=4" evidence="1">
    <location>
        <begin position="182"/>
        <end position="199"/>
    </location>
</feature>
<feature type="transmembrane region" description="Helical; Name=5" evidence="1">
    <location>
        <begin position="230"/>
        <end position="246"/>
    </location>
</feature>
<feature type="transmembrane region" description="Helical; Name=6" evidence="1">
    <location>
        <begin position="303"/>
        <end position="322"/>
    </location>
</feature>
<feature type="repeat" description="Solcar 1" evidence="2">
    <location>
        <begin position="11"/>
        <end position="111"/>
    </location>
</feature>
<feature type="repeat" description="Solcar 2" evidence="2">
    <location>
        <begin position="124"/>
        <end position="210"/>
    </location>
</feature>
<feature type="repeat" description="Solcar 3" evidence="2">
    <location>
        <begin position="231"/>
        <end position="328"/>
    </location>
</feature>
<name>TDPC2_MAIZE</name>
<keyword id="KW-0472">Membrane</keyword>
<keyword id="KW-0496">Mitochondrion</keyword>
<keyword id="KW-0999">Mitochondrion inner membrane</keyword>
<keyword id="KW-1185">Reference proteome</keyword>
<keyword id="KW-0677">Repeat</keyword>
<keyword id="KW-0812">Transmembrane</keyword>
<keyword id="KW-1133">Transmembrane helix</keyword>
<keyword id="KW-0813">Transport</keyword>
<protein>
    <recommendedName>
        <fullName evidence="5">Mitochondrial thiamine diphosphate carrier 2</fullName>
    </recommendedName>
</protein>
<accession>A0A1D6N272</accession>
<accession>A0A1D6N274</accession>
<accession>A0A1D6N275</accession>
<proteinExistence type="evidence at transcript level"/>
<dbReference type="EMBL" id="CM007649">
    <property type="protein sequence ID" value="ONM34813.1"/>
    <property type="status" value="ALT_SEQ"/>
    <property type="molecule type" value="Genomic_DNA"/>
</dbReference>
<dbReference type="EMBL" id="CM007649">
    <property type="protein sequence ID" value="ONM34814.1"/>
    <property type="status" value="ALT_SEQ"/>
    <property type="molecule type" value="Genomic_DNA"/>
</dbReference>
<dbReference type="EMBL" id="CM007649">
    <property type="protein sequence ID" value="ONM34815.1"/>
    <property type="status" value="ALT_SEQ"/>
    <property type="molecule type" value="Genomic_DNA"/>
</dbReference>
<dbReference type="EMBL" id="CM007649">
    <property type="protein sequence ID" value="ONM34817.1"/>
    <property type="status" value="ALT_SEQ"/>
    <property type="molecule type" value="Genomic_DNA"/>
</dbReference>
<dbReference type="EMBL" id="CM007649">
    <property type="protein sequence ID" value="ONM34816.1"/>
    <property type="molecule type" value="Genomic_DNA"/>
</dbReference>
<dbReference type="RefSeq" id="XP_008674594.1">
    <property type="nucleotide sequence ID" value="XM_008676372.1"/>
</dbReference>
<dbReference type="RefSeq" id="XP_008674595.1">
    <property type="nucleotide sequence ID" value="XM_008676373.1"/>
</dbReference>
<dbReference type="SMR" id="A0A1D6N272"/>
<dbReference type="FunCoup" id="A0A1D6N272">
    <property type="interactions" value="1467"/>
</dbReference>
<dbReference type="STRING" id="4577.A0A1D6N272"/>
<dbReference type="PaxDb" id="4577-GRMZM2G124911_P02"/>
<dbReference type="EnsemblPlants" id="Zm00001eb142190_T002">
    <property type="protein sequence ID" value="Zm00001eb142190_P002"/>
    <property type="gene ID" value="Zm00001eb142190"/>
</dbReference>
<dbReference type="GeneID" id="103650800"/>
<dbReference type="Gramene" id="Zm00001eb142190_T002">
    <property type="protein sequence ID" value="Zm00001eb142190_P002"/>
    <property type="gene ID" value="Zm00001eb142190"/>
</dbReference>
<dbReference type="KEGG" id="zma:103650800"/>
<dbReference type="eggNOG" id="KOG0752">
    <property type="taxonomic scope" value="Eukaryota"/>
</dbReference>
<dbReference type="InParanoid" id="A0A1D6N272"/>
<dbReference type="OMA" id="MYVCYGA"/>
<dbReference type="OrthoDB" id="18574at2759"/>
<dbReference type="Proteomes" id="UP000007305">
    <property type="component" value="Chromosome 3"/>
</dbReference>
<dbReference type="ExpressionAtlas" id="A0A1D6N272">
    <property type="expression patterns" value="baseline and differential"/>
</dbReference>
<dbReference type="GO" id="GO:0005743">
    <property type="term" value="C:mitochondrial inner membrane"/>
    <property type="evidence" value="ECO:0000318"/>
    <property type="project" value="GO_Central"/>
</dbReference>
<dbReference type="GO" id="GO:0005739">
    <property type="term" value="C:mitochondrion"/>
    <property type="evidence" value="ECO:0000314"/>
    <property type="project" value="UniProtKB"/>
</dbReference>
<dbReference type="GO" id="GO:0090422">
    <property type="term" value="F:thiamine pyrophosphate transmembrane transporter activity"/>
    <property type="evidence" value="ECO:0000314"/>
    <property type="project" value="UniProtKB"/>
</dbReference>
<dbReference type="GO" id="GO:0015234">
    <property type="term" value="F:thiamine transmembrane transporter activity"/>
    <property type="evidence" value="ECO:0000318"/>
    <property type="project" value="GO_Central"/>
</dbReference>
<dbReference type="GO" id="GO:0030974">
    <property type="term" value="P:thiamine pyrophosphate transmembrane transport"/>
    <property type="evidence" value="ECO:0000314"/>
    <property type="project" value="UniProtKB"/>
</dbReference>
<dbReference type="FunFam" id="1.50.40.10:FF:000011">
    <property type="entry name" value="Mitochondrial thiamine pyrophosphate carrier 1"/>
    <property type="match status" value="1"/>
</dbReference>
<dbReference type="Gene3D" id="1.50.40.10">
    <property type="entry name" value="Mitochondrial carrier domain"/>
    <property type="match status" value="1"/>
</dbReference>
<dbReference type="InterPro" id="IPR002067">
    <property type="entry name" value="Mit_carrier"/>
</dbReference>
<dbReference type="InterPro" id="IPR018108">
    <property type="entry name" value="Mitochondrial_sb/sol_carrier"/>
</dbReference>
<dbReference type="InterPro" id="IPR023395">
    <property type="entry name" value="Mt_carrier_dom_sf"/>
</dbReference>
<dbReference type="PANTHER" id="PTHR24089">
    <property type="entry name" value="SOLUTE CARRIER FAMILY 25"/>
    <property type="match status" value="1"/>
</dbReference>
<dbReference type="Pfam" id="PF00153">
    <property type="entry name" value="Mito_carr"/>
    <property type="match status" value="3"/>
</dbReference>
<dbReference type="PRINTS" id="PR00926">
    <property type="entry name" value="MITOCARRIER"/>
</dbReference>
<dbReference type="SUPFAM" id="SSF103506">
    <property type="entry name" value="Mitochondrial carrier"/>
    <property type="match status" value="1"/>
</dbReference>
<dbReference type="PROSITE" id="PS50920">
    <property type="entry name" value="SOLCAR"/>
    <property type="match status" value="3"/>
</dbReference>
<evidence type="ECO:0000255" key="1"/>
<evidence type="ECO:0000255" key="2">
    <source>
        <dbReference type="PROSITE-ProRule" id="PRU00282"/>
    </source>
</evidence>
<evidence type="ECO:0000269" key="3">
    <source>
    </source>
</evidence>
<evidence type="ECO:0000303" key="4">
    <source>
    </source>
</evidence>
<evidence type="ECO:0000305" key="5"/>
<evidence type="ECO:0000312" key="6">
    <source>
        <dbReference type="EMBL" id="ONM34816.1"/>
    </source>
</evidence>
<reference key="1">
    <citation type="journal article" date="2009" name="Science">
        <title>The B73 maize genome: complexity, diversity, and dynamics.</title>
        <authorList>
            <person name="Schnable P.S."/>
            <person name="Ware D."/>
            <person name="Fulton R.S."/>
            <person name="Stein J.C."/>
            <person name="Wei F."/>
            <person name="Pasternak S."/>
            <person name="Liang C."/>
            <person name="Zhang J."/>
            <person name="Fulton L."/>
            <person name="Graves T.A."/>
            <person name="Minx P."/>
            <person name="Reily A.D."/>
            <person name="Courtney L."/>
            <person name="Kruchowski S.S."/>
            <person name="Tomlinson C."/>
            <person name="Strong C."/>
            <person name="Delehaunty K."/>
            <person name="Fronick C."/>
            <person name="Courtney B."/>
            <person name="Rock S.M."/>
            <person name="Belter E."/>
            <person name="Du F."/>
            <person name="Kim K."/>
            <person name="Abbott R.M."/>
            <person name="Cotton M."/>
            <person name="Levy A."/>
            <person name="Marchetto P."/>
            <person name="Ochoa K."/>
            <person name="Jackson S.M."/>
            <person name="Gillam B."/>
            <person name="Chen W."/>
            <person name="Yan L."/>
            <person name="Higginbotham J."/>
            <person name="Cardenas M."/>
            <person name="Waligorski J."/>
            <person name="Applebaum E."/>
            <person name="Phelps L."/>
            <person name="Falcone J."/>
            <person name="Kanchi K."/>
            <person name="Thane T."/>
            <person name="Scimone A."/>
            <person name="Thane N."/>
            <person name="Henke J."/>
            <person name="Wang T."/>
            <person name="Ruppert J."/>
            <person name="Shah N."/>
            <person name="Rotter K."/>
            <person name="Hodges J."/>
            <person name="Ingenthron E."/>
            <person name="Cordes M."/>
            <person name="Kohlberg S."/>
            <person name="Sgro J."/>
            <person name="Delgado B."/>
            <person name="Mead K."/>
            <person name="Chinwalla A."/>
            <person name="Leonard S."/>
            <person name="Crouse K."/>
            <person name="Collura K."/>
            <person name="Kudrna D."/>
            <person name="Currie J."/>
            <person name="He R."/>
            <person name="Angelova A."/>
            <person name="Rajasekar S."/>
            <person name="Mueller T."/>
            <person name="Lomeli R."/>
            <person name="Scara G."/>
            <person name="Ko A."/>
            <person name="Delaney K."/>
            <person name="Wissotski M."/>
            <person name="Lopez G."/>
            <person name="Campos D."/>
            <person name="Braidotti M."/>
            <person name="Ashley E."/>
            <person name="Golser W."/>
            <person name="Kim H."/>
            <person name="Lee S."/>
            <person name="Lin J."/>
            <person name="Dujmic Z."/>
            <person name="Kim W."/>
            <person name="Talag J."/>
            <person name="Zuccolo A."/>
            <person name="Fan C."/>
            <person name="Sebastian A."/>
            <person name="Kramer M."/>
            <person name="Spiegel L."/>
            <person name="Nascimento L."/>
            <person name="Zutavern T."/>
            <person name="Miller B."/>
            <person name="Ambroise C."/>
            <person name="Muller S."/>
            <person name="Spooner W."/>
            <person name="Narechania A."/>
            <person name="Ren L."/>
            <person name="Wei S."/>
            <person name="Kumari S."/>
            <person name="Faga B."/>
            <person name="Levy M.J."/>
            <person name="McMahan L."/>
            <person name="Van Buren P."/>
            <person name="Vaughn M.W."/>
            <person name="Ying K."/>
            <person name="Yeh C.-T."/>
            <person name="Emrich S.J."/>
            <person name="Jia Y."/>
            <person name="Kalyanaraman A."/>
            <person name="Hsia A.-P."/>
            <person name="Barbazuk W.B."/>
            <person name="Baucom R.S."/>
            <person name="Brutnell T.P."/>
            <person name="Carpita N.C."/>
            <person name="Chaparro C."/>
            <person name="Chia J.-M."/>
            <person name="Deragon J.-M."/>
            <person name="Estill J.C."/>
            <person name="Fu Y."/>
            <person name="Jeddeloh J.A."/>
            <person name="Han Y."/>
            <person name="Lee H."/>
            <person name="Li P."/>
            <person name="Lisch D.R."/>
            <person name="Liu S."/>
            <person name="Liu Z."/>
            <person name="Nagel D.H."/>
            <person name="McCann M.C."/>
            <person name="SanMiguel P."/>
            <person name="Myers A.M."/>
            <person name="Nettleton D."/>
            <person name="Nguyen J."/>
            <person name="Penning B.W."/>
            <person name="Ponnala L."/>
            <person name="Schneider K.L."/>
            <person name="Schwartz D.C."/>
            <person name="Sharma A."/>
            <person name="Soderlund C."/>
            <person name="Springer N.M."/>
            <person name="Sun Q."/>
            <person name="Wang H."/>
            <person name="Waterman M."/>
            <person name="Westerman R."/>
            <person name="Wolfgruber T.K."/>
            <person name="Yang L."/>
            <person name="Yu Y."/>
            <person name="Zhang L."/>
            <person name="Zhou S."/>
            <person name="Zhu Q."/>
            <person name="Bennetzen J.L."/>
            <person name="Dawe R.K."/>
            <person name="Jiang J."/>
            <person name="Jiang N."/>
            <person name="Presting G.G."/>
            <person name="Wessler S.R."/>
            <person name="Aluru S."/>
            <person name="Martienssen R.A."/>
            <person name="Clifton S.W."/>
            <person name="McCombie W.R."/>
            <person name="Wing R.A."/>
            <person name="Wilson R.K."/>
        </authorList>
    </citation>
    <scope>NUCLEOTIDE SEQUENCE [LARGE SCALE GENOMIC DNA]</scope>
    <source>
        <strain>cv. B73</strain>
    </source>
</reference>
<reference key="2">
    <citation type="journal article" date="2012" name="Funct. Integr. Genomics">
        <title>Identification of mitochondrial thiamin diphosphate carriers from Arabidopsis and maize.</title>
        <authorList>
            <person name="Frelin O."/>
            <person name="Agrimi G."/>
            <person name="Laera V.L."/>
            <person name="Castegna A."/>
            <person name="Richardson L.G."/>
            <person name="Mullen R.T."/>
            <person name="Lerma-Ortiz C."/>
            <person name="Palmieri F."/>
            <person name="Hanson A.D."/>
        </authorList>
    </citation>
    <scope>FUNCTION</scope>
    <scope>SUBCELLULAR LOCATION</scope>
    <scope>TISSUE SPECIFICITY</scope>
</reference>
<gene>
    <name evidence="4" type="ORF">GRMZM2G124911</name>
    <name evidence="6" type="ORF">Zm00001d042213</name>
</gene>
<comment type="function">
    <text evidence="3">Mitochondrial transporter that mediates uptake of thiamine diphosphate (ThDP) into mitochondria.</text>
</comment>
<comment type="subcellular location">
    <subcellularLocation>
        <location evidence="3">Mitochondrion inner membrane</location>
        <topology evidence="1">Multi-pass membrane protein</topology>
    </subcellularLocation>
</comment>
<comment type="tissue specificity">
    <text evidence="3">Ubiquitous.</text>
</comment>
<comment type="similarity">
    <text evidence="5">Belongs to the mitochondrial carrier (TC 2.A.29) family.</text>
</comment>
<comment type="sequence caution" evidence="5">
    <conflict type="erroneous gene model prediction">
        <sequence resource="EMBL-CDS" id="ONM34813"/>
    </conflict>
</comment>
<comment type="sequence caution" evidence="5">
    <conflict type="erroneous gene model prediction">
        <sequence resource="EMBL-CDS" id="ONM34814"/>
    </conflict>
</comment>
<comment type="sequence caution" evidence="5">
    <conflict type="erroneous gene model prediction">
        <sequence resource="EMBL-CDS" id="ONM34815"/>
    </conflict>
</comment>
<comment type="sequence caution" evidence="5">
    <conflict type="erroneous gene model prediction">
        <sequence resource="EMBL-CDS" id="ONM34817"/>
    </conflict>
</comment>